<protein>
    <recommendedName>
        <fullName>Double C2-like domain-containing protein alpha</fullName>
        <shortName>Doc2</shortName>
        <shortName>Doc2-alpha</shortName>
    </recommendedName>
</protein>
<gene>
    <name type="primary">DOC2A</name>
</gene>
<organism>
    <name type="scientific">Homo sapiens</name>
    <name type="common">Human</name>
    <dbReference type="NCBI Taxonomy" id="9606"/>
    <lineage>
        <taxon>Eukaryota</taxon>
        <taxon>Metazoa</taxon>
        <taxon>Chordata</taxon>
        <taxon>Craniata</taxon>
        <taxon>Vertebrata</taxon>
        <taxon>Euteleostomi</taxon>
        <taxon>Mammalia</taxon>
        <taxon>Eutheria</taxon>
        <taxon>Euarchontoglires</taxon>
        <taxon>Primates</taxon>
        <taxon>Haplorrhini</taxon>
        <taxon>Catarrhini</taxon>
        <taxon>Hominidae</taxon>
        <taxon>Homo</taxon>
    </lineage>
</organism>
<comment type="function">
    <text evidence="4 7 8">Calcium sensor which most probably regulates fusion of vesicles with membranes. Binds calcium and phospholipids. May be involved in calcium dependent neurotransmitter release through the interaction with UNC13A. May be involved in calcium-dependent spontaneous release of neurotransmitter in absence of action potentials in neuronal cells. Regulates Ca(2+)-dependent secretory lysosome exocytosis in mast cells.</text>
</comment>
<comment type="cofactor">
    <cofactor evidence="2">
        <name>Ca(2+)</name>
        <dbReference type="ChEBI" id="CHEBI:29108"/>
    </cofactor>
</comment>
<comment type="subunit">
    <text evidence="4 7 8">Interacts (via N-terminus) with UNC13A. Interacts with cytoplasmic dynein light chain DYNLT1. Interacts with UNC13D.</text>
</comment>
<comment type="interaction">
    <interactant intactId="EBI-20861623">
        <id>Q14183</id>
    </interactant>
    <interactant intactId="EBI-1380492">
        <id>Q8TF42</id>
        <label>UBASH3B</label>
    </interactant>
    <organismsDiffer>false</organismsDiffer>
    <experiments>7</experiments>
</comment>
<comment type="subcellular location">
    <subcellularLocation>
        <location evidence="1">Lysosome</location>
    </subcellularLocation>
    <subcellularLocation>
        <location evidence="10">Cytoplasmic vesicle</location>
        <location evidence="10">Secretory vesicle</location>
        <location evidence="10">Synaptic vesicle membrane</location>
        <topology evidence="10">Peripheral membrane protein</topology>
    </subcellularLocation>
    <subcellularLocation>
        <location>Synapse</location>
        <location>Synaptosome</location>
    </subcellularLocation>
</comment>
<comment type="alternative products">
    <event type="alternative splicing"/>
    <isoform>
        <id>Q14183-1</id>
        <name>1</name>
        <sequence type="displayed"/>
    </isoform>
    <isoform>
        <id>Q14183-2</id>
        <name>2</name>
        <sequence type="described" ref="VSP_056977 VSP_056978 VSP_056979"/>
    </isoform>
</comment>
<comment type="tissue specificity">
    <text evidence="5 6">Predominantly expressed in brain. Also expressed in testis.</text>
</comment>
<comment type="domain">
    <text evidence="1">C2 domain 1 is involved in binding calcium and phospholipids.</text>
</comment>
<proteinExistence type="evidence at protein level"/>
<feature type="chain" id="PRO_0000079965" description="Double C2-like domain-containing protein alpha">
    <location>
        <begin position="1"/>
        <end position="400"/>
    </location>
</feature>
<feature type="domain" description="C2 1" evidence="2">
    <location>
        <begin position="89"/>
        <end position="211"/>
    </location>
</feature>
<feature type="domain" description="C2 2" evidence="2">
    <location>
        <begin position="251"/>
        <end position="384"/>
    </location>
</feature>
<feature type="region of interest" description="Interaction with UNC13D and DYNLT1" evidence="4 8">
    <location>
        <begin position="1"/>
        <end position="89"/>
    </location>
</feature>
<feature type="region of interest" description="Interaction with UNC13D" evidence="4">
    <location>
        <begin position="215"/>
        <end position="400"/>
    </location>
</feature>
<feature type="binding site" evidence="2">
    <location>
        <position position="120"/>
    </location>
    <ligand>
        <name>Ca(2+)</name>
        <dbReference type="ChEBI" id="CHEBI:29108"/>
        <label>1</label>
    </ligand>
</feature>
<feature type="binding site" evidence="2">
    <location>
        <position position="126"/>
    </location>
    <ligand>
        <name>Ca(2+)</name>
        <dbReference type="ChEBI" id="CHEBI:29108"/>
        <label>1</label>
    </ligand>
</feature>
<feature type="binding site" evidence="2">
    <location>
        <position position="181"/>
    </location>
    <ligand>
        <name>Ca(2+)</name>
        <dbReference type="ChEBI" id="CHEBI:29108"/>
        <label>1</label>
    </ligand>
</feature>
<feature type="binding site" evidence="2">
    <location>
        <position position="183"/>
    </location>
    <ligand>
        <name>Ca(2+)</name>
        <dbReference type="ChEBI" id="CHEBI:29108"/>
        <label>1</label>
    </ligand>
</feature>
<feature type="binding site" evidence="2">
    <location>
        <position position="282"/>
    </location>
    <ligand>
        <name>Ca(2+)</name>
        <dbReference type="ChEBI" id="CHEBI:29108"/>
        <label>2</label>
    </ligand>
</feature>
<feature type="binding site" evidence="2">
    <location>
        <position position="282"/>
    </location>
    <ligand>
        <name>Ca(2+)</name>
        <dbReference type="ChEBI" id="CHEBI:29108"/>
        <label>3</label>
    </ligand>
</feature>
<feature type="binding site" evidence="2">
    <location>
        <position position="288"/>
    </location>
    <ligand>
        <name>Ca(2+)</name>
        <dbReference type="ChEBI" id="CHEBI:29108"/>
        <label>2</label>
    </ligand>
</feature>
<feature type="binding site" evidence="2">
    <location>
        <position position="342"/>
    </location>
    <ligand>
        <name>Ca(2+)</name>
        <dbReference type="ChEBI" id="CHEBI:29108"/>
        <label>2</label>
    </ligand>
</feature>
<feature type="binding site" evidence="2">
    <location>
        <position position="342"/>
    </location>
    <ligand>
        <name>Ca(2+)</name>
        <dbReference type="ChEBI" id="CHEBI:29108"/>
        <label>3</label>
    </ligand>
</feature>
<feature type="binding site" evidence="2">
    <location>
        <position position="344"/>
    </location>
    <ligand>
        <name>Ca(2+)</name>
        <dbReference type="ChEBI" id="CHEBI:29108"/>
        <label>2</label>
    </ligand>
</feature>
<feature type="binding site" evidence="2">
    <location>
        <position position="344"/>
    </location>
    <ligand>
        <name>Ca(2+)</name>
        <dbReference type="ChEBI" id="CHEBI:29108"/>
        <label>3</label>
    </ligand>
</feature>
<feature type="binding site" evidence="2">
    <location>
        <position position="350"/>
    </location>
    <ligand>
        <name>Ca(2+)</name>
        <dbReference type="ChEBI" id="CHEBI:29108"/>
        <label>3</label>
    </ligand>
</feature>
<feature type="splice variant" id="VSP_056977" description="In isoform 2." evidence="9">
    <location>
        <begin position="1"/>
        <end position="118"/>
    </location>
</feature>
<feature type="splice variant" id="VSP_056978" description="In isoform 2." evidence="9">
    <original>GILRCAHLAAM</original>
    <variation>PEARCGQEIQA</variation>
    <location>
        <begin position="271"/>
        <end position="281"/>
    </location>
</feature>
<feature type="splice variant" id="VSP_056979" description="In isoform 2." evidence="9">
    <location>
        <begin position="282"/>
        <end position="400"/>
    </location>
</feature>
<feature type="sequence variant" id="VAR_019656" description="In dbSNP:rs1140239." evidence="3 5">
    <original>G</original>
    <variation>S</variation>
    <location>
        <position position="48"/>
    </location>
</feature>
<feature type="sequence conflict" description="In Ref. 1; BAA06695." evidence="10" ref="1">
    <original>T</original>
    <variation>K</variation>
    <location>
        <position position="92"/>
    </location>
</feature>
<feature type="sequence conflict" description="In Ref. 1; BAA06695." evidence="10" ref="1">
    <original>CS</original>
    <variation>VC</variation>
    <location>
        <begin position="108"/>
        <end position="109"/>
    </location>
</feature>
<feature type="sequence conflict" description="In Ref. 1; BAA06695." evidence="10" ref="1">
    <original>E</original>
    <variation>D</variation>
    <location>
        <position position="238"/>
    </location>
</feature>
<feature type="sequence conflict" description="In Ref. 1; BAA06695." evidence="10" ref="1">
    <original>P</original>
    <variation>R</variation>
    <location>
        <position position="376"/>
    </location>
</feature>
<feature type="strand" evidence="11">
    <location>
        <begin position="92"/>
        <end position="100"/>
    </location>
</feature>
<feature type="turn" evidence="11">
    <location>
        <begin position="101"/>
        <end position="104"/>
    </location>
</feature>
<feature type="strand" evidence="11">
    <location>
        <begin position="105"/>
        <end position="115"/>
    </location>
</feature>
<feature type="strand" evidence="11">
    <location>
        <begin position="127"/>
        <end position="135"/>
    </location>
</feature>
<feature type="helix" evidence="11">
    <location>
        <begin position="139"/>
        <end position="141"/>
    </location>
</feature>
<feature type="strand" evidence="11">
    <location>
        <begin position="142"/>
        <end position="144"/>
    </location>
</feature>
<feature type="strand" evidence="11">
    <location>
        <begin position="155"/>
        <end position="162"/>
    </location>
</feature>
<feature type="helix" evidence="11">
    <location>
        <begin position="167"/>
        <end position="172"/>
    </location>
</feature>
<feature type="strand" evidence="11">
    <location>
        <begin position="174"/>
        <end position="181"/>
    </location>
</feature>
<feature type="strand" evidence="11">
    <location>
        <begin position="190"/>
        <end position="197"/>
    </location>
</feature>
<feature type="helix" evidence="11">
    <location>
        <begin position="198"/>
        <end position="200"/>
    </location>
</feature>
<feature type="strand" evidence="11">
    <location>
        <begin position="207"/>
        <end position="212"/>
    </location>
</feature>
<accession>Q14183</accession>
<accession>B4DEJ2</accession>
<accession>H3BNH6</accession>
<accession>Q6P4G4</accession>
<accession>Q7Z5G0</accession>
<accession>Q8IVX0</accession>
<name>DOC2A_HUMAN</name>
<dbReference type="EMBL" id="D31897">
    <property type="protein sequence ID" value="BAA06695.1"/>
    <property type="molecule type" value="mRNA"/>
</dbReference>
<dbReference type="EMBL" id="AK293651">
    <property type="protein sequence ID" value="BAG57103.1"/>
    <property type="molecule type" value="mRNA"/>
</dbReference>
<dbReference type="EMBL" id="AC093512">
    <property type="status" value="NOT_ANNOTATED_CDS"/>
    <property type="molecule type" value="Genomic_DNA"/>
</dbReference>
<dbReference type="EMBL" id="BC041769">
    <property type="protein sequence ID" value="AAH41769.2"/>
    <property type="molecule type" value="mRNA"/>
</dbReference>
<dbReference type="EMBL" id="BC055284">
    <property type="protein sequence ID" value="AAH55284.1"/>
    <property type="molecule type" value="mRNA"/>
</dbReference>
<dbReference type="EMBL" id="BC063436">
    <property type="protein sequence ID" value="AAH63436.1"/>
    <property type="molecule type" value="mRNA"/>
</dbReference>
<dbReference type="CCDS" id="CCDS10666.1">
    <molecule id="Q14183-1"/>
</dbReference>
<dbReference type="PIR" id="JC2473">
    <property type="entry name" value="JC2473"/>
</dbReference>
<dbReference type="RefSeq" id="NP_001268991.1">
    <molecule id="Q14183-1"/>
    <property type="nucleotide sequence ID" value="NM_001282062.1"/>
</dbReference>
<dbReference type="RefSeq" id="NP_001268992.1">
    <molecule id="Q14183-1"/>
    <property type="nucleotide sequence ID" value="NM_001282063.2"/>
</dbReference>
<dbReference type="RefSeq" id="NP_001268997.1">
    <molecule id="Q14183-1"/>
    <property type="nucleotide sequence ID" value="NM_001282068.2"/>
</dbReference>
<dbReference type="RefSeq" id="NP_003577.2">
    <molecule id="Q14183-1"/>
    <property type="nucleotide sequence ID" value="NM_003586.2"/>
</dbReference>
<dbReference type="RefSeq" id="XP_011544277.1">
    <property type="nucleotide sequence ID" value="XM_011545975.1"/>
</dbReference>
<dbReference type="RefSeq" id="XP_016879265.1">
    <property type="nucleotide sequence ID" value="XM_017023776.1"/>
</dbReference>
<dbReference type="RefSeq" id="XP_016879266.1">
    <property type="nucleotide sequence ID" value="XM_017023777.1"/>
</dbReference>
<dbReference type="RefSeq" id="XP_047290758.1">
    <molecule id="Q14183-1"/>
    <property type="nucleotide sequence ID" value="XM_047434802.1"/>
</dbReference>
<dbReference type="RefSeq" id="XP_047290759.1">
    <molecule id="Q14183-1"/>
    <property type="nucleotide sequence ID" value="XM_047434803.1"/>
</dbReference>
<dbReference type="RefSeq" id="XP_047290760.1">
    <molecule id="Q14183-1"/>
    <property type="nucleotide sequence ID" value="XM_047434804.1"/>
</dbReference>
<dbReference type="RefSeq" id="XP_047290761.1">
    <molecule id="Q14183-1"/>
    <property type="nucleotide sequence ID" value="XM_047434805.1"/>
</dbReference>
<dbReference type="RefSeq" id="XP_047290762.1">
    <molecule id="Q14183-1"/>
    <property type="nucleotide sequence ID" value="XM_047434806.1"/>
</dbReference>
<dbReference type="RefSeq" id="XP_047290763.1">
    <molecule id="Q14183-1"/>
    <property type="nucleotide sequence ID" value="XM_047434807.1"/>
</dbReference>
<dbReference type="PDB" id="4MJJ">
    <property type="method" value="X-ray"/>
    <property type="resolution" value="2.00 A"/>
    <property type="chains" value="A=81-217"/>
</dbReference>
<dbReference type="PDBsum" id="4MJJ"/>
<dbReference type="SMR" id="Q14183"/>
<dbReference type="BioGRID" id="114026">
    <property type="interactions" value="17"/>
</dbReference>
<dbReference type="FunCoup" id="Q14183">
    <property type="interactions" value="84"/>
</dbReference>
<dbReference type="IntAct" id="Q14183">
    <property type="interactions" value="12"/>
</dbReference>
<dbReference type="STRING" id="9606.ENSP00000482870"/>
<dbReference type="iPTMnet" id="Q14183"/>
<dbReference type="PhosphoSitePlus" id="Q14183"/>
<dbReference type="SwissPalm" id="Q14183"/>
<dbReference type="BioMuta" id="DOC2A"/>
<dbReference type="DMDM" id="150421541"/>
<dbReference type="jPOST" id="Q14183"/>
<dbReference type="MassIVE" id="Q14183"/>
<dbReference type="PaxDb" id="9606-ENSP00000340017"/>
<dbReference type="PeptideAtlas" id="Q14183"/>
<dbReference type="ProteomicsDB" id="3964"/>
<dbReference type="ProteomicsDB" id="59901">
    <molecule id="Q14183-1"/>
</dbReference>
<dbReference type="Antibodypedia" id="26947">
    <property type="antibodies" value="130 antibodies from 24 providers"/>
</dbReference>
<dbReference type="DNASU" id="8448"/>
<dbReference type="Ensembl" id="ENST00000350119.9">
    <molecule id="Q14183-1"/>
    <property type="protein sequence ID" value="ENSP00000340017.4"/>
    <property type="gene ID" value="ENSG00000149927.18"/>
</dbReference>
<dbReference type="Ensembl" id="ENST00000564944.5">
    <molecule id="Q14183-1"/>
    <property type="protein sequence ID" value="ENSP00000455196.1"/>
    <property type="gene ID" value="ENSG00000149927.18"/>
</dbReference>
<dbReference type="Ensembl" id="ENST00000564979.5">
    <molecule id="Q14183-1"/>
    <property type="protein sequence ID" value="ENSP00000455624.1"/>
    <property type="gene ID" value="ENSG00000149927.18"/>
</dbReference>
<dbReference type="Ensembl" id="ENST00000566310.5">
    <molecule id="Q14183-2"/>
    <property type="protein sequence ID" value="ENSP00000454857.1"/>
    <property type="gene ID" value="ENSG00000149927.18"/>
</dbReference>
<dbReference type="Ensembl" id="ENST00000616445.4">
    <molecule id="Q14183-1"/>
    <property type="protein sequence ID" value="ENSP00000482870.1"/>
    <property type="gene ID" value="ENSG00000149927.18"/>
</dbReference>
<dbReference type="GeneID" id="8448"/>
<dbReference type="KEGG" id="hsa:8448"/>
<dbReference type="MANE-Select" id="ENST00000350119.9">
    <property type="protein sequence ID" value="ENSP00000340017.4"/>
    <property type="RefSeq nucleotide sequence ID" value="NM_003586.3"/>
    <property type="RefSeq protein sequence ID" value="NP_003577.2"/>
</dbReference>
<dbReference type="UCSC" id="uc002dvn.4">
    <molecule id="Q14183-1"/>
    <property type="organism name" value="human"/>
</dbReference>
<dbReference type="AGR" id="HGNC:2985"/>
<dbReference type="CTD" id="8448"/>
<dbReference type="DisGeNET" id="8448"/>
<dbReference type="GeneCards" id="DOC2A"/>
<dbReference type="HGNC" id="HGNC:2985">
    <property type="gene designation" value="DOC2A"/>
</dbReference>
<dbReference type="HPA" id="ENSG00000149927">
    <property type="expression patterns" value="Group enriched (brain, testis)"/>
</dbReference>
<dbReference type="MIM" id="604567">
    <property type="type" value="gene"/>
</dbReference>
<dbReference type="neXtProt" id="NX_Q14183"/>
<dbReference type="NIAGADS" id="ENSG00000149927"/>
<dbReference type="OpenTargets" id="ENSG00000149927"/>
<dbReference type="PharmGKB" id="PA27451"/>
<dbReference type="VEuPathDB" id="HostDB:ENSG00000149927"/>
<dbReference type="eggNOG" id="KOG1013">
    <property type="taxonomic scope" value="Eukaryota"/>
</dbReference>
<dbReference type="GeneTree" id="ENSGT00940000159141"/>
<dbReference type="HOGENOM" id="CLU_023008_3_0_1"/>
<dbReference type="InParanoid" id="Q14183"/>
<dbReference type="OMA" id="WEMEQQR"/>
<dbReference type="OrthoDB" id="270970at2759"/>
<dbReference type="PAN-GO" id="Q14183">
    <property type="GO annotations" value="5 GO annotations based on evolutionary models"/>
</dbReference>
<dbReference type="PhylomeDB" id="Q14183"/>
<dbReference type="TreeFam" id="TF351844"/>
<dbReference type="PathwayCommons" id="Q14183"/>
<dbReference type="SignaLink" id="Q14183"/>
<dbReference type="BioGRID-ORCS" id="8448">
    <property type="hits" value="16 hits in 1152 CRISPR screens"/>
</dbReference>
<dbReference type="ChiTaRS" id="DOC2A">
    <property type="organism name" value="human"/>
</dbReference>
<dbReference type="EvolutionaryTrace" id="Q14183"/>
<dbReference type="GeneWiki" id="DOC2A"/>
<dbReference type="GenomeRNAi" id="8448"/>
<dbReference type="Pharos" id="Q14183">
    <property type="development level" value="Tbio"/>
</dbReference>
<dbReference type="PRO" id="PR:Q14183"/>
<dbReference type="Proteomes" id="UP000005640">
    <property type="component" value="Chromosome 16"/>
</dbReference>
<dbReference type="RNAct" id="Q14183">
    <property type="molecule type" value="protein"/>
</dbReference>
<dbReference type="Bgee" id="ENSG00000149927">
    <property type="expression patterns" value="Expressed in right frontal lobe and 107 other cell types or tissues"/>
</dbReference>
<dbReference type="ExpressionAtlas" id="Q14183">
    <property type="expression patterns" value="baseline and differential"/>
</dbReference>
<dbReference type="GO" id="GO:0098850">
    <property type="term" value="C:extrinsic component of synaptic vesicle membrane"/>
    <property type="evidence" value="ECO:0000318"/>
    <property type="project" value="GO_Central"/>
</dbReference>
<dbReference type="GO" id="GO:0098978">
    <property type="term" value="C:glutamatergic synapse"/>
    <property type="evidence" value="ECO:0007669"/>
    <property type="project" value="Ensembl"/>
</dbReference>
<dbReference type="GO" id="GO:0005764">
    <property type="term" value="C:lysosome"/>
    <property type="evidence" value="ECO:0007669"/>
    <property type="project" value="UniProtKB-SubCell"/>
</dbReference>
<dbReference type="GO" id="GO:0043005">
    <property type="term" value="C:neuron projection"/>
    <property type="evidence" value="ECO:0007669"/>
    <property type="project" value="UniProtKB-KW"/>
</dbReference>
<dbReference type="GO" id="GO:0045202">
    <property type="term" value="C:synapse"/>
    <property type="evidence" value="ECO:0000318"/>
    <property type="project" value="GO_Central"/>
</dbReference>
<dbReference type="GO" id="GO:0005544">
    <property type="term" value="F:calcium-dependent phospholipid binding"/>
    <property type="evidence" value="ECO:0007669"/>
    <property type="project" value="UniProtKB-KW"/>
</dbReference>
<dbReference type="GO" id="GO:0046872">
    <property type="term" value="F:metal ion binding"/>
    <property type="evidence" value="ECO:0007669"/>
    <property type="project" value="UniProtKB-KW"/>
</dbReference>
<dbReference type="GO" id="GO:0099502">
    <property type="term" value="P:calcium-dependent activation of synaptic vesicle fusion"/>
    <property type="evidence" value="ECO:0000318"/>
    <property type="project" value="GO_Central"/>
</dbReference>
<dbReference type="GO" id="GO:0007268">
    <property type="term" value="P:chemical synaptic transmission"/>
    <property type="evidence" value="ECO:0000304"/>
    <property type="project" value="ProtInc"/>
</dbReference>
<dbReference type="GO" id="GO:0007399">
    <property type="term" value="P:nervous system development"/>
    <property type="evidence" value="ECO:0000304"/>
    <property type="project" value="ProtInc"/>
</dbReference>
<dbReference type="GO" id="GO:0045956">
    <property type="term" value="P:positive regulation of calcium ion-dependent exocytosis"/>
    <property type="evidence" value="ECO:0000318"/>
    <property type="project" value="GO_Central"/>
</dbReference>
<dbReference type="GO" id="GO:0017158">
    <property type="term" value="P:regulation of calcium ion-dependent exocytosis"/>
    <property type="evidence" value="ECO:0000315"/>
    <property type="project" value="UniProtKB"/>
</dbReference>
<dbReference type="GO" id="GO:0061669">
    <property type="term" value="P:spontaneous neurotransmitter secretion"/>
    <property type="evidence" value="ECO:0007669"/>
    <property type="project" value="Ensembl"/>
</dbReference>
<dbReference type="CDD" id="cd04035">
    <property type="entry name" value="C2A_Rabphilin_Doc2"/>
    <property type="match status" value="1"/>
</dbReference>
<dbReference type="CDD" id="cd08384">
    <property type="entry name" value="C2B_Rabphilin_Doc2"/>
    <property type="match status" value="1"/>
</dbReference>
<dbReference type="FunFam" id="2.60.40.150:FF:000032">
    <property type="entry name" value="Double c2-like domain-containing"/>
    <property type="match status" value="1"/>
</dbReference>
<dbReference type="FunFam" id="2.60.40.150:FF:000023">
    <property type="entry name" value="Double C2-like domain-containing protein"/>
    <property type="match status" value="1"/>
</dbReference>
<dbReference type="Gene3D" id="2.60.40.150">
    <property type="entry name" value="C2 domain"/>
    <property type="match status" value="2"/>
</dbReference>
<dbReference type="InterPro" id="IPR000008">
    <property type="entry name" value="C2_dom"/>
</dbReference>
<dbReference type="InterPro" id="IPR035892">
    <property type="entry name" value="C2_domain_sf"/>
</dbReference>
<dbReference type="InterPro" id="IPR014638">
    <property type="entry name" value="Doc2"/>
</dbReference>
<dbReference type="InterPro" id="IPR043566">
    <property type="entry name" value="Rabphilin/DOC2/Noc2"/>
</dbReference>
<dbReference type="InterPro" id="IPR047022">
    <property type="entry name" value="Rabphilin_Doc2_C2A"/>
</dbReference>
<dbReference type="InterPro" id="IPR001565">
    <property type="entry name" value="Synaptotagmin"/>
</dbReference>
<dbReference type="PANTHER" id="PTHR45729:SF1">
    <property type="entry name" value="DOUBLE C2-LIKE DOMAIN-CONTAINING PROTEIN ALPHA"/>
    <property type="match status" value="1"/>
</dbReference>
<dbReference type="PANTHER" id="PTHR45729">
    <property type="entry name" value="RABPHILIN, ISOFORM A"/>
    <property type="match status" value="1"/>
</dbReference>
<dbReference type="Pfam" id="PF00168">
    <property type="entry name" value="C2"/>
    <property type="match status" value="2"/>
</dbReference>
<dbReference type="PIRSF" id="PIRSF036931">
    <property type="entry name" value="Doc2"/>
    <property type="match status" value="1"/>
</dbReference>
<dbReference type="PRINTS" id="PR00360">
    <property type="entry name" value="C2DOMAIN"/>
</dbReference>
<dbReference type="PRINTS" id="PR00399">
    <property type="entry name" value="SYNAPTOTAGMN"/>
</dbReference>
<dbReference type="SMART" id="SM00239">
    <property type="entry name" value="C2"/>
    <property type="match status" value="2"/>
</dbReference>
<dbReference type="SUPFAM" id="SSF49562">
    <property type="entry name" value="C2 domain (Calcium/lipid-binding domain, CaLB)"/>
    <property type="match status" value="2"/>
</dbReference>
<dbReference type="PROSITE" id="PS50004">
    <property type="entry name" value="C2"/>
    <property type="match status" value="2"/>
</dbReference>
<sequence length="400" mass="43959">MRGRRGDRMTINIQEHMAINVCPGPIRPIRQISDYFPRGPGPEGGGGGGGEAPAHLVPLALAPPAALLGATTPEDGAEVDSYDSDDATALGTLEFDLLYDRASCTLHCSILRAKGLKPMDFNGLADPYVKLHLLPGACKANKLKTKTQRNTLNPVWNEDLTYSGITDDDITHKVLRIAVCDEDKLSHNEFIGEIRVPLRRLKPSQKKHFNICLERQVPLASPSSMSAALRGISCYLKELEQAEQGQGLLEERGRILLSLSYSSRRRGLLVGILRCAHLAAMDVNGYSDPYVKTYLRPDVDKKSKHKTCVKKKTLNPEFNEEFFYEIELSTLATKTLEVTVWDYDIGKSNDFIGGVSLGPGARGEARKHWSDCLQQPDAALERWHTLTSELPPAAGALSSA</sequence>
<reference key="1">
    <citation type="journal article" date="1995" name="Biochem. Biophys. Res. Commun.">
        <title>Doc2, a novel synaptic vesicle protein with two repeated C2-like domains.</title>
        <authorList>
            <person name="Orita S."/>
            <person name="Sasaki T."/>
            <person name="Naito A."/>
            <person name="Maeda M."/>
            <person name="Igarashi H."/>
            <person name="Takai Y."/>
        </authorList>
    </citation>
    <scope>NUCLEOTIDE SEQUENCE [MRNA] (ISOFORM 1)</scope>
    <scope>VARIANT SER-48</scope>
    <scope>TISSUE SPECIFICITY</scope>
    <source>
        <tissue>Brain</tissue>
    </source>
</reference>
<reference key="2">
    <citation type="journal article" date="2004" name="Nat. Genet.">
        <title>Complete sequencing and characterization of 21,243 full-length human cDNAs.</title>
        <authorList>
            <person name="Ota T."/>
            <person name="Suzuki Y."/>
            <person name="Nishikawa T."/>
            <person name="Otsuki T."/>
            <person name="Sugiyama T."/>
            <person name="Irie R."/>
            <person name="Wakamatsu A."/>
            <person name="Hayashi K."/>
            <person name="Sato H."/>
            <person name="Nagai K."/>
            <person name="Kimura K."/>
            <person name="Makita H."/>
            <person name="Sekine M."/>
            <person name="Obayashi M."/>
            <person name="Nishi T."/>
            <person name="Shibahara T."/>
            <person name="Tanaka T."/>
            <person name="Ishii S."/>
            <person name="Yamamoto J."/>
            <person name="Saito K."/>
            <person name="Kawai Y."/>
            <person name="Isono Y."/>
            <person name="Nakamura Y."/>
            <person name="Nagahari K."/>
            <person name="Murakami K."/>
            <person name="Yasuda T."/>
            <person name="Iwayanagi T."/>
            <person name="Wagatsuma M."/>
            <person name="Shiratori A."/>
            <person name="Sudo H."/>
            <person name="Hosoiri T."/>
            <person name="Kaku Y."/>
            <person name="Kodaira H."/>
            <person name="Kondo H."/>
            <person name="Sugawara M."/>
            <person name="Takahashi M."/>
            <person name="Kanda K."/>
            <person name="Yokoi T."/>
            <person name="Furuya T."/>
            <person name="Kikkawa E."/>
            <person name="Omura Y."/>
            <person name="Abe K."/>
            <person name="Kamihara K."/>
            <person name="Katsuta N."/>
            <person name="Sato K."/>
            <person name="Tanikawa M."/>
            <person name="Yamazaki M."/>
            <person name="Ninomiya K."/>
            <person name="Ishibashi T."/>
            <person name="Yamashita H."/>
            <person name="Murakawa K."/>
            <person name="Fujimori K."/>
            <person name="Tanai H."/>
            <person name="Kimata M."/>
            <person name="Watanabe M."/>
            <person name="Hiraoka S."/>
            <person name="Chiba Y."/>
            <person name="Ishida S."/>
            <person name="Ono Y."/>
            <person name="Takiguchi S."/>
            <person name="Watanabe S."/>
            <person name="Yosida M."/>
            <person name="Hotuta T."/>
            <person name="Kusano J."/>
            <person name="Kanehori K."/>
            <person name="Takahashi-Fujii A."/>
            <person name="Hara H."/>
            <person name="Tanase T.-O."/>
            <person name="Nomura Y."/>
            <person name="Togiya S."/>
            <person name="Komai F."/>
            <person name="Hara R."/>
            <person name="Takeuchi K."/>
            <person name="Arita M."/>
            <person name="Imose N."/>
            <person name="Musashino K."/>
            <person name="Yuuki H."/>
            <person name="Oshima A."/>
            <person name="Sasaki N."/>
            <person name="Aotsuka S."/>
            <person name="Yoshikawa Y."/>
            <person name="Matsunawa H."/>
            <person name="Ichihara T."/>
            <person name="Shiohata N."/>
            <person name="Sano S."/>
            <person name="Moriya S."/>
            <person name="Momiyama H."/>
            <person name="Satoh N."/>
            <person name="Takami S."/>
            <person name="Terashima Y."/>
            <person name="Suzuki O."/>
            <person name="Nakagawa S."/>
            <person name="Senoh A."/>
            <person name="Mizoguchi H."/>
            <person name="Goto Y."/>
            <person name="Shimizu F."/>
            <person name="Wakebe H."/>
            <person name="Hishigaki H."/>
            <person name="Watanabe T."/>
            <person name="Sugiyama A."/>
            <person name="Takemoto M."/>
            <person name="Kawakami B."/>
            <person name="Yamazaki M."/>
            <person name="Watanabe K."/>
            <person name="Kumagai A."/>
            <person name="Itakura S."/>
            <person name="Fukuzumi Y."/>
            <person name="Fujimori Y."/>
            <person name="Komiyama M."/>
            <person name="Tashiro H."/>
            <person name="Tanigami A."/>
            <person name="Fujiwara T."/>
            <person name="Ono T."/>
            <person name="Yamada K."/>
            <person name="Fujii Y."/>
            <person name="Ozaki K."/>
            <person name="Hirao M."/>
            <person name="Ohmori Y."/>
            <person name="Kawabata A."/>
            <person name="Hikiji T."/>
            <person name="Kobatake N."/>
            <person name="Inagaki H."/>
            <person name="Ikema Y."/>
            <person name="Okamoto S."/>
            <person name="Okitani R."/>
            <person name="Kawakami T."/>
            <person name="Noguchi S."/>
            <person name="Itoh T."/>
            <person name="Shigeta K."/>
            <person name="Senba T."/>
            <person name="Matsumura K."/>
            <person name="Nakajima Y."/>
            <person name="Mizuno T."/>
            <person name="Morinaga M."/>
            <person name="Sasaki M."/>
            <person name="Togashi T."/>
            <person name="Oyama M."/>
            <person name="Hata H."/>
            <person name="Watanabe M."/>
            <person name="Komatsu T."/>
            <person name="Mizushima-Sugano J."/>
            <person name="Satoh T."/>
            <person name="Shirai Y."/>
            <person name="Takahashi Y."/>
            <person name="Nakagawa K."/>
            <person name="Okumura K."/>
            <person name="Nagase T."/>
            <person name="Nomura N."/>
            <person name="Kikuchi H."/>
            <person name="Masuho Y."/>
            <person name="Yamashita R."/>
            <person name="Nakai K."/>
            <person name="Yada T."/>
            <person name="Nakamura Y."/>
            <person name="Ohara O."/>
            <person name="Isogai T."/>
            <person name="Sugano S."/>
        </authorList>
    </citation>
    <scope>NUCLEOTIDE SEQUENCE [LARGE SCALE MRNA] (ISOFORM 2)</scope>
    <source>
        <tissue>Cerebellum</tissue>
    </source>
</reference>
<reference key="3">
    <citation type="journal article" date="2004" name="Nature">
        <title>The sequence and analysis of duplication-rich human chromosome 16.</title>
        <authorList>
            <person name="Martin J."/>
            <person name="Han C."/>
            <person name="Gordon L.A."/>
            <person name="Terry A."/>
            <person name="Prabhakar S."/>
            <person name="She X."/>
            <person name="Xie G."/>
            <person name="Hellsten U."/>
            <person name="Chan Y.M."/>
            <person name="Altherr M."/>
            <person name="Couronne O."/>
            <person name="Aerts A."/>
            <person name="Bajorek E."/>
            <person name="Black S."/>
            <person name="Blumer H."/>
            <person name="Branscomb E."/>
            <person name="Brown N.C."/>
            <person name="Bruno W.J."/>
            <person name="Buckingham J.M."/>
            <person name="Callen D.F."/>
            <person name="Campbell C.S."/>
            <person name="Campbell M.L."/>
            <person name="Campbell E.W."/>
            <person name="Caoile C."/>
            <person name="Challacombe J.F."/>
            <person name="Chasteen L.A."/>
            <person name="Chertkov O."/>
            <person name="Chi H.C."/>
            <person name="Christensen M."/>
            <person name="Clark L.M."/>
            <person name="Cohn J.D."/>
            <person name="Denys M."/>
            <person name="Detter J.C."/>
            <person name="Dickson M."/>
            <person name="Dimitrijevic-Bussod M."/>
            <person name="Escobar J."/>
            <person name="Fawcett J.J."/>
            <person name="Flowers D."/>
            <person name="Fotopulos D."/>
            <person name="Glavina T."/>
            <person name="Gomez M."/>
            <person name="Gonzales E."/>
            <person name="Goodstein D."/>
            <person name="Goodwin L.A."/>
            <person name="Grady D.L."/>
            <person name="Grigoriev I."/>
            <person name="Groza M."/>
            <person name="Hammon N."/>
            <person name="Hawkins T."/>
            <person name="Haydu L."/>
            <person name="Hildebrand C.E."/>
            <person name="Huang W."/>
            <person name="Israni S."/>
            <person name="Jett J."/>
            <person name="Jewett P.B."/>
            <person name="Kadner K."/>
            <person name="Kimball H."/>
            <person name="Kobayashi A."/>
            <person name="Krawczyk M.-C."/>
            <person name="Leyba T."/>
            <person name="Longmire J.L."/>
            <person name="Lopez F."/>
            <person name="Lou Y."/>
            <person name="Lowry S."/>
            <person name="Ludeman T."/>
            <person name="Manohar C.F."/>
            <person name="Mark G.A."/>
            <person name="McMurray K.L."/>
            <person name="Meincke L.J."/>
            <person name="Morgan J."/>
            <person name="Moyzis R.K."/>
            <person name="Mundt M.O."/>
            <person name="Munk A.C."/>
            <person name="Nandkeshwar R.D."/>
            <person name="Pitluck S."/>
            <person name="Pollard M."/>
            <person name="Predki P."/>
            <person name="Parson-Quintana B."/>
            <person name="Ramirez L."/>
            <person name="Rash S."/>
            <person name="Retterer J."/>
            <person name="Ricke D.O."/>
            <person name="Robinson D.L."/>
            <person name="Rodriguez A."/>
            <person name="Salamov A."/>
            <person name="Saunders E.H."/>
            <person name="Scott D."/>
            <person name="Shough T."/>
            <person name="Stallings R.L."/>
            <person name="Stalvey M."/>
            <person name="Sutherland R.D."/>
            <person name="Tapia R."/>
            <person name="Tesmer J.G."/>
            <person name="Thayer N."/>
            <person name="Thompson L.S."/>
            <person name="Tice H."/>
            <person name="Torney D.C."/>
            <person name="Tran-Gyamfi M."/>
            <person name="Tsai M."/>
            <person name="Ulanovsky L.E."/>
            <person name="Ustaszewska A."/>
            <person name="Vo N."/>
            <person name="White P.S."/>
            <person name="Williams A.L."/>
            <person name="Wills P.L."/>
            <person name="Wu J.-R."/>
            <person name="Wu K."/>
            <person name="Yang J."/>
            <person name="DeJong P."/>
            <person name="Bruce D."/>
            <person name="Doggett N.A."/>
            <person name="Deaven L."/>
            <person name="Schmutz J."/>
            <person name="Grimwood J."/>
            <person name="Richardson P."/>
            <person name="Rokhsar D.S."/>
            <person name="Eichler E.E."/>
            <person name="Gilna P."/>
            <person name="Lucas S.M."/>
            <person name="Myers R.M."/>
            <person name="Rubin E.M."/>
            <person name="Pennacchio L.A."/>
        </authorList>
    </citation>
    <scope>NUCLEOTIDE SEQUENCE [LARGE SCALE GENOMIC DNA]</scope>
</reference>
<reference key="4">
    <citation type="journal article" date="2004" name="Genome Res.">
        <title>The status, quality, and expansion of the NIH full-length cDNA project: the Mammalian Gene Collection (MGC).</title>
        <authorList>
            <consortium name="The MGC Project Team"/>
        </authorList>
    </citation>
    <scope>NUCLEOTIDE SEQUENCE [LARGE SCALE MRNA] (ISOFORM 1)</scope>
    <scope>VARIANT SER-48</scope>
    <source>
        <tissue>Brain</tissue>
        <tissue>Mammary gland</tissue>
    </source>
</reference>
<reference key="5">
    <citation type="journal article" date="1995" name="Biochem. Biophys. Res. Commun.">
        <title>Molecular cloning of an isoform of Doc2 having two C2-like domains.</title>
        <authorList>
            <person name="Sakaguchi G."/>
            <person name="Orita S."/>
            <person name="Maeda M."/>
            <person name="Igarashi H."/>
            <person name="Takai Y."/>
        </authorList>
    </citation>
    <scope>TISSUE SPECIFICITY</scope>
</reference>
<reference key="6">
    <citation type="journal article" date="1998" name="Proc. Natl. Acad. Sci. U.S.A.">
        <title>Role of the Doc2 alpha-Munc13-1 interaction in the neurotransmitter release process.</title>
        <authorList>
            <person name="Mochida S."/>
            <person name="Orita S."/>
            <person name="Sakaguchi G."/>
            <person name="Sasaki T."/>
            <person name="Takai Y."/>
        </authorList>
    </citation>
    <scope>FUNCTION</scope>
    <scope>INTERACTION WITH UNC13A</scope>
</reference>
<reference key="7">
    <citation type="journal article" date="1998" name="J. Biol. Chem.">
        <title>Interaction of Doc2 with tctex-1, a light chain of cytoplasmic dynein. Implication in dynein-dependent vesicle transport.</title>
        <authorList>
            <person name="Nagano F."/>
            <person name="Orita S."/>
            <person name="Sasaki T."/>
            <person name="Naito A."/>
            <person name="Sakaguchi G."/>
            <person name="Maeda M."/>
            <person name="Watanabe T."/>
            <person name="Kominami E."/>
            <person name="Uchiyama Y."/>
            <person name="Takai Y."/>
        </authorList>
    </citation>
    <scope>FUNCTION</scope>
    <scope>INTERACTION WITH DYNLT1</scope>
</reference>
<reference key="8">
    <citation type="journal article" date="2008" name="J. Immunol.">
        <title>Doc2 alpha and Munc13-4 regulate Ca(2+) -dependent secretory lysosome exocytosis in mast cells.</title>
        <authorList>
            <person name="Higashio H."/>
            <person name="Nishimura N."/>
            <person name="Ishizaki H."/>
            <person name="Miyoshi J."/>
            <person name="Orita S."/>
            <person name="Sakane A."/>
            <person name="Sasaki T."/>
        </authorList>
    </citation>
    <scope>FUNCTION</scope>
    <scope>INTERACTION WITH UNC13D</scope>
</reference>
<evidence type="ECO:0000250" key="1"/>
<evidence type="ECO:0000255" key="2">
    <source>
        <dbReference type="PROSITE-ProRule" id="PRU00041"/>
    </source>
</evidence>
<evidence type="ECO:0000269" key="3">
    <source>
    </source>
</evidence>
<evidence type="ECO:0000269" key="4">
    <source>
    </source>
</evidence>
<evidence type="ECO:0000269" key="5">
    <source>
    </source>
</evidence>
<evidence type="ECO:0000269" key="6">
    <source>
    </source>
</evidence>
<evidence type="ECO:0000269" key="7">
    <source>
    </source>
</evidence>
<evidence type="ECO:0000269" key="8">
    <source>
    </source>
</evidence>
<evidence type="ECO:0000303" key="9">
    <source>
    </source>
</evidence>
<evidence type="ECO:0000305" key="10"/>
<evidence type="ECO:0007829" key="11">
    <source>
        <dbReference type="PDB" id="4MJJ"/>
    </source>
</evidence>
<keyword id="KW-0002">3D-structure</keyword>
<keyword id="KW-0025">Alternative splicing</keyword>
<keyword id="KW-0106">Calcium</keyword>
<keyword id="KW-0111">Calcium/phospholipid-binding</keyword>
<keyword id="KW-0968">Cytoplasmic vesicle</keyword>
<keyword id="KW-0268">Exocytosis</keyword>
<keyword id="KW-0458">Lysosome</keyword>
<keyword id="KW-0472">Membrane</keyword>
<keyword id="KW-0479">Metal-binding</keyword>
<keyword id="KW-1267">Proteomics identification</keyword>
<keyword id="KW-1185">Reference proteome</keyword>
<keyword id="KW-0677">Repeat</keyword>
<keyword id="KW-0770">Synapse</keyword>
<keyword id="KW-0771">Synaptosome</keyword>